<dbReference type="EMBL" id="AC005314">
    <property type="protein sequence ID" value="AAC36161.2"/>
    <property type="molecule type" value="Genomic_DNA"/>
</dbReference>
<dbReference type="EMBL" id="AC006068">
    <property type="protein sequence ID" value="AAM15118.1"/>
    <property type="molecule type" value="Genomic_DNA"/>
</dbReference>
<dbReference type="EMBL" id="CP002685">
    <property type="protein sequence ID" value="AEC09126.1"/>
    <property type="molecule type" value="Genomic_DNA"/>
</dbReference>
<dbReference type="EMBL" id="CP002685">
    <property type="protein sequence ID" value="ANM61846.1"/>
    <property type="molecule type" value="Genomic_DNA"/>
</dbReference>
<dbReference type="EMBL" id="CP002685">
    <property type="protein sequence ID" value="ANM61847.1"/>
    <property type="molecule type" value="Genomic_DNA"/>
</dbReference>
<dbReference type="EMBL" id="AY087525">
    <property type="protein sequence ID" value="AAM65067.1"/>
    <property type="molecule type" value="mRNA"/>
</dbReference>
<dbReference type="PIR" id="F84770">
    <property type="entry name" value="F84770"/>
</dbReference>
<dbReference type="RefSeq" id="NP_001324041.1">
    <property type="nucleotide sequence ID" value="NM_001336562.1"/>
</dbReference>
<dbReference type="RefSeq" id="NP_001324042.1">
    <property type="nucleotide sequence ID" value="NM_001336563.1"/>
</dbReference>
<dbReference type="RefSeq" id="NP_565809.1">
    <property type="nucleotide sequence ID" value="NM_129113.5"/>
</dbReference>
<dbReference type="SMR" id="O82281"/>
<dbReference type="FunCoup" id="O82281">
    <property type="interactions" value="85"/>
</dbReference>
<dbReference type="STRING" id="3702.O82281"/>
<dbReference type="GlyGen" id="O82281">
    <property type="glycosylation" value="2 sites"/>
</dbReference>
<dbReference type="PaxDb" id="3702-AT2G35600.1"/>
<dbReference type="ProteomicsDB" id="240480"/>
<dbReference type="EnsemblPlants" id="AT2G35600.1">
    <property type="protein sequence ID" value="AT2G35600.1"/>
    <property type="gene ID" value="AT2G35600"/>
</dbReference>
<dbReference type="EnsemblPlants" id="AT2G35600.2">
    <property type="protein sequence ID" value="AT2G35600.2"/>
    <property type="gene ID" value="AT2G35600"/>
</dbReference>
<dbReference type="EnsemblPlants" id="AT2G35600.3">
    <property type="protein sequence ID" value="AT2G35600.3"/>
    <property type="gene ID" value="AT2G35600"/>
</dbReference>
<dbReference type="GeneID" id="818126"/>
<dbReference type="Gramene" id="AT2G35600.1">
    <property type="protein sequence ID" value="AT2G35600.1"/>
    <property type="gene ID" value="AT2G35600"/>
</dbReference>
<dbReference type="Gramene" id="AT2G35600.2">
    <property type="protein sequence ID" value="AT2G35600.2"/>
    <property type="gene ID" value="AT2G35600"/>
</dbReference>
<dbReference type="Gramene" id="AT2G35600.3">
    <property type="protein sequence ID" value="AT2G35600.3"/>
    <property type="gene ID" value="AT2G35600"/>
</dbReference>
<dbReference type="KEGG" id="ath:AT2G35600"/>
<dbReference type="Araport" id="AT2G35600"/>
<dbReference type="TAIR" id="AT2G35600">
    <property type="gene designation" value="BRXL1"/>
</dbReference>
<dbReference type="eggNOG" id="ENOG502QU4N">
    <property type="taxonomic scope" value="Eukaryota"/>
</dbReference>
<dbReference type="HOGENOM" id="CLU_033380_0_1_1"/>
<dbReference type="InParanoid" id="O82281"/>
<dbReference type="OMA" id="GESEWIA"/>
<dbReference type="OrthoDB" id="10250282at2759"/>
<dbReference type="PhylomeDB" id="O82281"/>
<dbReference type="PRO" id="PR:O82281"/>
<dbReference type="Proteomes" id="UP000006548">
    <property type="component" value="Chromosome 2"/>
</dbReference>
<dbReference type="ExpressionAtlas" id="O82281">
    <property type="expression patterns" value="baseline and differential"/>
</dbReference>
<dbReference type="GO" id="GO:0005634">
    <property type="term" value="C:nucleus"/>
    <property type="evidence" value="ECO:0007669"/>
    <property type="project" value="UniProtKB-SubCell"/>
</dbReference>
<dbReference type="InterPro" id="IPR013591">
    <property type="entry name" value="Brevis_radix_dom"/>
</dbReference>
<dbReference type="InterPro" id="IPR044532">
    <property type="entry name" value="BRX-like"/>
</dbReference>
<dbReference type="InterPro" id="IPR027988">
    <property type="entry name" value="BRX_N"/>
</dbReference>
<dbReference type="PANTHER" id="PTHR46058">
    <property type="entry name" value="PROTEIN BREVIS RADIX-LIKE 1"/>
    <property type="match status" value="1"/>
</dbReference>
<dbReference type="PANTHER" id="PTHR46058:SF26">
    <property type="entry name" value="PROTEIN BREVIS RADIX-LIKE 1"/>
    <property type="match status" value="1"/>
</dbReference>
<dbReference type="Pfam" id="PF08381">
    <property type="entry name" value="BRX"/>
    <property type="match status" value="2"/>
</dbReference>
<dbReference type="Pfam" id="PF13713">
    <property type="entry name" value="BRX_N"/>
    <property type="match status" value="1"/>
</dbReference>
<dbReference type="PROSITE" id="PS51514">
    <property type="entry name" value="BRX"/>
    <property type="match status" value="2"/>
</dbReference>
<comment type="function">
    <text evidence="4">May act as a regulator of cell proliferation and elongation in the root.</text>
</comment>
<comment type="subunit">
    <text>Heterodimer with BRXL1.</text>
</comment>
<comment type="subcellular location">
    <subcellularLocation>
        <location evidence="1">Nucleus</location>
    </subcellularLocation>
</comment>
<comment type="tissue specificity">
    <text evidence="4">Expressed in roots.</text>
</comment>
<comment type="disruption phenotype">
    <text evidence="4">No visible phenotype.</text>
</comment>
<comment type="miscellaneous">
    <text>Overexpression of BRXL1 can rescue the short root phenotype. However, it does not act redundantly with BRX in vivo, presumably due to a much lower level of expression.</text>
</comment>
<comment type="similarity">
    <text evidence="5">Belongs to the BRX family.</text>
</comment>
<proteinExistence type="evidence at transcript level"/>
<keyword id="KW-0539">Nucleus</keyword>
<keyword id="KW-1185">Reference proteome</keyword>
<keyword id="KW-0677">Repeat</keyword>
<organism>
    <name type="scientific">Arabidopsis thaliana</name>
    <name type="common">Mouse-ear cress</name>
    <dbReference type="NCBI Taxonomy" id="3702"/>
    <lineage>
        <taxon>Eukaryota</taxon>
        <taxon>Viridiplantae</taxon>
        <taxon>Streptophyta</taxon>
        <taxon>Embryophyta</taxon>
        <taxon>Tracheophyta</taxon>
        <taxon>Spermatophyta</taxon>
        <taxon>Magnoliopsida</taxon>
        <taxon>eudicotyledons</taxon>
        <taxon>Gunneridae</taxon>
        <taxon>Pentapetalae</taxon>
        <taxon>rosids</taxon>
        <taxon>malvids</taxon>
        <taxon>Brassicales</taxon>
        <taxon>Brassicaceae</taxon>
        <taxon>Camelineae</taxon>
        <taxon>Arabidopsis</taxon>
    </lineage>
</organism>
<feature type="chain" id="PRO_0000373822" description="Protein Brevis radix-like 1">
    <location>
        <begin position="1"/>
        <end position="331"/>
    </location>
</feature>
<feature type="domain" description="BRX 1" evidence="2">
    <location>
        <begin position="137"/>
        <end position="192"/>
    </location>
</feature>
<feature type="domain" description="BRX 2" evidence="2">
    <location>
        <begin position="276"/>
        <end position="331"/>
    </location>
</feature>
<feature type="region of interest" description="Disordered" evidence="3">
    <location>
        <begin position="1"/>
        <end position="111"/>
    </location>
</feature>
<feature type="region of interest" description="Disordered" evidence="3">
    <location>
        <begin position="201"/>
        <end position="246"/>
    </location>
</feature>
<feature type="region of interest" description="Disordered" evidence="3">
    <location>
        <begin position="258"/>
        <end position="279"/>
    </location>
</feature>
<feature type="compositionally biased region" description="Polar residues" evidence="3">
    <location>
        <begin position="25"/>
        <end position="41"/>
    </location>
</feature>
<feature type="compositionally biased region" description="Polar residues" evidence="3">
    <location>
        <begin position="48"/>
        <end position="66"/>
    </location>
</feature>
<feature type="compositionally biased region" description="Basic and acidic residues" evidence="3">
    <location>
        <begin position="221"/>
        <end position="235"/>
    </location>
</feature>
<feature type="sequence conflict" description="In Ref. 3; AAM65067." evidence="5" ref="3">
    <original>P</original>
    <variation>S</variation>
    <location>
        <position position="238"/>
    </location>
</feature>
<feature type="sequence conflict" description="In Ref. 3; AAM65067." evidence="5" ref="3">
    <original>E</original>
    <variation>D</variation>
    <location>
        <position position="320"/>
    </location>
</feature>
<accession>O82281</accession>
<accession>Q8LAY6</accession>
<gene>
    <name type="primary">BRXL1</name>
    <name type="ordered locus">At2g35600</name>
    <name type="ORF">T32F12.2</name>
</gene>
<name>BRXL1_ARATH</name>
<sequence>MFTCINCTKMADRGEEDEEDEARGSTTPNTKEAVKSLTTQIKDMASKFSGSHKQSKPTPGSSSSNLRKFPDFDTASESVPYPYPGGSTSSTPAWDLPRSSYHQSGRPDSRFTSMYGGERESISAQSCDVVLEDDEPKEWMAQVEPGVHITFVSLPSGGNDLKRIRFSREVFDKWQAQRWWGENYDRIVELYNVQRFNRQALQTPGRSEDQSQRDSTYTRIDSARESRDWTQRDNNFRPPGGSVPHHFYGPPMDAARITTSSRDEPPSMSNASEMQGEWVEEDEPGVYITIRQLPDGTRELRRVRFSRERFGEVHAKTWWEQNRDRIQTQYL</sequence>
<reference key="1">
    <citation type="journal article" date="1999" name="Nature">
        <title>Sequence and analysis of chromosome 2 of the plant Arabidopsis thaliana.</title>
        <authorList>
            <person name="Lin X."/>
            <person name="Kaul S."/>
            <person name="Rounsley S.D."/>
            <person name="Shea T.P."/>
            <person name="Benito M.-I."/>
            <person name="Town C.D."/>
            <person name="Fujii C.Y."/>
            <person name="Mason T.M."/>
            <person name="Bowman C.L."/>
            <person name="Barnstead M.E."/>
            <person name="Feldblyum T.V."/>
            <person name="Buell C.R."/>
            <person name="Ketchum K.A."/>
            <person name="Lee J.J."/>
            <person name="Ronning C.M."/>
            <person name="Koo H.L."/>
            <person name="Moffat K.S."/>
            <person name="Cronin L.A."/>
            <person name="Shen M."/>
            <person name="Pai G."/>
            <person name="Van Aken S."/>
            <person name="Umayam L."/>
            <person name="Tallon L.J."/>
            <person name="Gill J.E."/>
            <person name="Adams M.D."/>
            <person name="Carrera A.J."/>
            <person name="Creasy T.H."/>
            <person name="Goodman H.M."/>
            <person name="Somerville C.R."/>
            <person name="Copenhaver G.P."/>
            <person name="Preuss D."/>
            <person name="Nierman W.C."/>
            <person name="White O."/>
            <person name="Eisen J.A."/>
            <person name="Salzberg S.L."/>
            <person name="Fraser C.M."/>
            <person name="Venter J.C."/>
        </authorList>
    </citation>
    <scope>NUCLEOTIDE SEQUENCE [LARGE SCALE GENOMIC DNA]</scope>
    <source>
        <strain>cv. Columbia</strain>
    </source>
</reference>
<reference key="2">
    <citation type="journal article" date="2017" name="Plant J.">
        <title>Araport11: a complete reannotation of the Arabidopsis thaliana reference genome.</title>
        <authorList>
            <person name="Cheng C.Y."/>
            <person name="Krishnakumar V."/>
            <person name="Chan A.P."/>
            <person name="Thibaud-Nissen F."/>
            <person name="Schobel S."/>
            <person name="Town C.D."/>
        </authorList>
    </citation>
    <scope>GENOME REANNOTATION</scope>
    <source>
        <strain>cv. Columbia</strain>
    </source>
</reference>
<reference key="3">
    <citation type="submission" date="2002-03" db="EMBL/GenBank/DDBJ databases">
        <title>Full-length cDNA from Arabidopsis thaliana.</title>
        <authorList>
            <person name="Brover V.V."/>
            <person name="Troukhan M.E."/>
            <person name="Alexandrov N.A."/>
            <person name="Lu Y.-P."/>
            <person name="Flavell R.B."/>
            <person name="Feldmann K.A."/>
        </authorList>
    </citation>
    <scope>NUCLEOTIDE SEQUENCE [LARGE SCALE MRNA]</scope>
</reference>
<reference key="4">
    <citation type="journal article" date="2004" name="Genes Dev.">
        <title>Natural genetic variation in Arabidopsis identifies BREVIS RADIX, a novel regulator of cell proliferation and elongation in the root.</title>
        <authorList>
            <person name="Mouchel C.F."/>
            <person name="Briggs G.C."/>
            <person name="Hardtke C.S."/>
        </authorList>
    </citation>
    <scope>IDENTIFICATION</scope>
</reference>
<reference key="5">
    <citation type="journal article" date="2006" name="Plant Physiol.">
        <title>Characterization of the plant-specific BREVIS RADIX gene family reveals limited genetic redundancy despite high sequence conservation.</title>
        <authorList>
            <person name="Briggs G.C."/>
            <person name="Mouchel C.F."/>
            <person name="Hardtke C.S."/>
        </authorList>
    </citation>
    <scope>GENE FAMILY</scope>
    <scope>FUNCTION</scope>
    <scope>DISRUPTION PHENOTYPE</scope>
    <scope>TISSUE SPECIFICITY</scope>
</reference>
<protein>
    <recommendedName>
        <fullName>Protein Brevis radix-like 1</fullName>
        <shortName>AtBRXL1</shortName>
    </recommendedName>
</protein>
<evidence type="ECO:0000250" key="1"/>
<evidence type="ECO:0000255" key="2">
    <source>
        <dbReference type="PROSITE-ProRule" id="PRU00847"/>
    </source>
</evidence>
<evidence type="ECO:0000256" key="3">
    <source>
        <dbReference type="SAM" id="MobiDB-lite"/>
    </source>
</evidence>
<evidence type="ECO:0000269" key="4">
    <source>
    </source>
</evidence>
<evidence type="ECO:0000305" key="5"/>